<proteinExistence type="predicted"/>
<protein>
    <recommendedName>
        <fullName>Putative F-box protein At3g47150</fullName>
    </recommendedName>
</protein>
<evidence type="ECO:0000305" key="1"/>
<gene>
    <name type="ordered locus">At3g47150</name>
    <name type="ORF">F13I12.200</name>
</gene>
<comment type="sequence caution" evidence="1">
    <conflict type="erroneous gene model prediction">
        <sequence resource="EMBL-CDS" id="CAB61961"/>
    </conflict>
</comment>
<sequence>MKFGPNTTQIYIPLDLQINILLRLPVKSLLRFRCVSKLWCSIITSHDFRNRHFNITSSSAPPRLLIAFQDFYGEKLLLVSSPNPNVSSSSTSSCCVPYKDLSKVEINGRKVYNAVWGLTCFESRLKVGICNPSTRELHMFPQIKFKNYPDIFPCIMYFLGYDRIEDQYKVLAIDNLPWRLEYKVVPILRASRKDKGSPNISIIVSFDVRSETYKNSNVPSKLLPMDTSDNFWTANCNCFIGDKTLINYNGKIGVVEKPQHGRFRMWVVEDAEKEEWSMNTFYLPQSASGLDFKVMNTFYTGEICLVTEKISDPFCLFYYNLKTNSMRSVTYEGLLHMATFKQALQFSVSYHYESLVSLET</sequence>
<reference key="1">
    <citation type="journal article" date="2000" name="Nature">
        <title>Sequence and analysis of chromosome 3 of the plant Arabidopsis thaliana.</title>
        <authorList>
            <person name="Salanoubat M."/>
            <person name="Lemcke K."/>
            <person name="Rieger M."/>
            <person name="Ansorge W."/>
            <person name="Unseld M."/>
            <person name="Fartmann B."/>
            <person name="Valle G."/>
            <person name="Bloecker H."/>
            <person name="Perez-Alonso M."/>
            <person name="Obermaier B."/>
            <person name="Delseny M."/>
            <person name="Boutry M."/>
            <person name="Grivell L.A."/>
            <person name="Mache R."/>
            <person name="Puigdomenech P."/>
            <person name="De Simone V."/>
            <person name="Choisne N."/>
            <person name="Artiguenave F."/>
            <person name="Robert C."/>
            <person name="Brottier P."/>
            <person name="Wincker P."/>
            <person name="Cattolico L."/>
            <person name="Weissenbach J."/>
            <person name="Saurin W."/>
            <person name="Quetier F."/>
            <person name="Schaefer M."/>
            <person name="Mueller-Auer S."/>
            <person name="Gabel C."/>
            <person name="Fuchs M."/>
            <person name="Benes V."/>
            <person name="Wurmbach E."/>
            <person name="Drzonek H."/>
            <person name="Erfle H."/>
            <person name="Jordan N."/>
            <person name="Bangert S."/>
            <person name="Wiedelmann R."/>
            <person name="Kranz H."/>
            <person name="Voss H."/>
            <person name="Holland R."/>
            <person name="Brandt P."/>
            <person name="Nyakatura G."/>
            <person name="Vezzi A."/>
            <person name="D'Angelo M."/>
            <person name="Pallavicini A."/>
            <person name="Toppo S."/>
            <person name="Simionati B."/>
            <person name="Conrad A."/>
            <person name="Hornischer K."/>
            <person name="Kauer G."/>
            <person name="Loehnert T.-H."/>
            <person name="Nordsiek G."/>
            <person name="Reichelt J."/>
            <person name="Scharfe M."/>
            <person name="Schoen O."/>
            <person name="Bargues M."/>
            <person name="Terol J."/>
            <person name="Climent J."/>
            <person name="Navarro P."/>
            <person name="Collado C."/>
            <person name="Perez-Perez A."/>
            <person name="Ottenwaelder B."/>
            <person name="Duchemin D."/>
            <person name="Cooke R."/>
            <person name="Laudie M."/>
            <person name="Berger-Llauro C."/>
            <person name="Purnelle B."/>
            <person name="Masuy D."/>
            <person name="de Haan M."/>
            <person name="Maarse A.C."/>
            <person name="Alcaraz J.-P."/>
            <person name="Cottet A."/>
            <person name="Casacuberta E."/>
            <person name="Monfort A."/>
            <person name="Argiriou A."/>
            <person name="Flores M."/>
            <person name="Liguori R."/>
            <person name="Vitale D."/>
            <person name="Mannhaupt G."/>
            <person name="Haase D."/>
            <person name="Schoof H."/>
            <person name="Rudd S."/>
            <person name="Zaccaria P."/>
            <person name="Mewes H.-W."/>
            <person name="Mayer K.F.X."/>
            <person name="Kaul S."/>
            <person name="Town C.D."/>
            <person name="Koo H.L."/>
            <person name="Tallon L.J."/>
            <person name="Jenkins J."/>
            <person name="Rooney T."/>
            <person name="Rizzo M."/>
            <person name="Walts A."/>
            <person name="Utterback T."/>
            <person name="Fujii C.Y."/>
            <person name="Shea T.P."/>
            <person name="Creasy T.H."/>
            <person name="Haas B."/>
            <person name="Maiti R."/>
            <person name="Wu D."/>
            <person name="Peterson J."/>
            <person name="Van Aken S."/>
            <person name="Pai G."/>
            <person name="Militscher J."/>
            <person name="Sellers P."/>
            <person name="Gill J.E."/>
            <person name="Feldblyum T.V."/>
            <person name="Preuss D."/>
            <person name="Lin X."/>
            <person name="Nierman W.C."/>
            <person name="Salzberg S.L."/>
            <person name="White O."/>
            <person name="Venter J.C."/>
            <person name="Fraser C.M."/>
            <person name="Kaneko T."/>
            <person name="Nakamura Y."/>
            <person name="Sato S."/>
            <person name="Kato T."/>
            <person name="Asamizu E."/>
            <person name="Sasamoto S."/>
            <person name="Kimura T."/>
            <person name="Idesawa K."/>
            <person name="Kawashima K."/>
            <person name="Kishida Y."/>
            <person name="Kiyokawa C."/>
            <person name="Kohara M."/>
            <person name="Matsumoto M."/>
            <person name="Matsuno A."/>
            <person name="Muraki A."/>
            <person name="Nakayama S."/>
            <person name="Nakazaki N."/>
            <person name="Shinpo S."/>
            <person name="Takeuchi C."/>
            <person name="Wada T."/>
            <person name="Watanabe A."/>
            <person name="Yamada M."/>
            <person name="Yasuda M."/>
            <person name="Tabata S."/>
        </authorList>
    </citation>
    <scope>NUCLEOTIDE SEQUENCE [LARGE SCALE GENOMIC DNA]</scope>
    <source>
        <strain>cv. Columbia</strain>
    </source>
</reference>
<reference key="2">
    <citation type="journal article" date="2017" name="Plant J.">
        <title>Araport11: a complete reannotation of the Arabidopsis thaliana reference genome.</title>
        <authorList>
            <person name="Cheng C.Y."/>
            <person name="Krishnakumar V."/>
            <person name="Chan A.P."/>
            <person name="Thibaud-Nissen F."/>
            <person name="Schobel S."/>
            <person name="Town C.D."/>
        </authorList>
    </citation>
    <scope>GENOME REANNOTATION</scope>
    <source>
        <strain>cv. Columbia</strain>
    </source>
</reference>
<accession>Q9SD58</accession>
<keyword id="KW-1185">Reference proteome</keyword>
<feature type="chain" id="PRO_0000283466" description="Putative F-box protein At3g47150">
    <location>
        <begin position="1"/>
        <end position="360"/>
    </location>
</feature>
<feature type="domain" description="F-box">
    <location>
        <begin position="6"/>
        <end position="56"/>
    </location>
</feature>
<organism>
    <name type="scientific">Arabidopsis thaliana</name>
    <name type="common">Mouse-ear cress</name>
    <dbReference type="NCBI Taxonomy" id="3702"/>
    <lineage>
        <taxon>Eukaryota</taxon>
        <taxon>Viridiplantae</taxon>
        <taxon>Streptophyta</taxon>
        <taxon>Embryophyta</taxon>
        <taxon>Tracheophyta</taxon>
        <taxon>Spermatophyta</taxon>
        <taxon>Magnoliopsida</taxon>
        <taxon>eudicotyledons</taxon>
        <taxon>Gunneridae</taxon>
        <taxon>Pentapetalae</taxon>
        <taxon>rosids</taxon>
        <taxon>malvids</taxon>
        <taxon>Brassicales</taxon>
        <taxon>Brassicaceae</taxon>
        <taxon>Camelineae</taxon>
        <taxon>Arabidopsis</taxon>
    </lineage>
</organism>
<name>FB196_ARATH</name>
<dbReference type="EMBL" id="AL133292">
    <property type="protein sequence ID" value="CAB61961.1"/>
    <property type="status" value="ALT_SEQ"/>
    <property type="molecule type" value="Genomic_DNA"/>
</dbReference>
<dbReference type="EMBL" id="CP002686">
    <property type="protein sequence ID" value="AEE78248.1"/>
    <property type="molecule type" value="Genomic_DNA"/>
</dbReference>
<dbReference type="PIR" id="T45651">
    <property type="entry name" value="T45651"/>
</dbReference>
<dbReference type="RefSeq" id="NP_190299.2">
    <property type="nucleotide sequence ID" value="NM_114582.2"/>
</dbReference>
<dbReference type="PaxDb" id="3702-AT3G47150.1"/>
<dbReference type="ProteomicsDB" id="230792"/>
<dbReference type="EnsemblPlants" id="AT3G47150.1">
    <property type="protein sequence ID" value="AT3G47150.1"/>
    <property type="gene ID" value="AT3G47150"/>
</dbReference>
<dbReference type="GeneID" id="823868"/>
<dbReference type="Gramene" id="AT3G47150.1">
    <property type="protein sequence ID" value="AT3G47150.1"/>
    <property type="gene ID" value="AT3G47150"/>
</dbReference>
<dbReference type="KEGG" id="ath:AT3G47150"/>
<dbReference type="Araport" id="AT3G47150"/>
<dbReference type="TAIR" id="AT3G47150"/>
<dbReference type="HOGENOM" id="CLU_027176_8_2_1"/>
<dbReference type="InParanoid" id="Q9SD58"/>
<dbReference type="OMA" id="VESPRVC"/>
<dbReference type="PhylomeDB" id="Q9SD58"/>
<dbReference type="PRO" id="PR:Q9SD58"/>
<dbReference type="Proteomes" id="UP000006548">
    <property type="component" value="Chromosome 3"/>
</dbReference>
<dbReference type="CDD" id="cd22157">
    <property type="entry name" value="F-box_AtFBW1-like"/>
    <property type="match status" value="1"/>
</dbReference>
<dbReference type="Gene3D" id="1.20.1280.50">
    <property type="match status" value="1"/>
</dbReference>
<dbReference type="InterPro" id="IPR013187">
    <property type="entry name" value="F-box-assoc_dom_typ3"/>
</dbReference>
<dbReference type="InterPro" id="IPR017451">
    <property type="entry name" value="F-box-assoc_interact_dom"/>
</dbReference>
<dbReference type="InterPro" id="IPR036047">
    <property type="entry name" value="F-box-like_dom_sf"/>
</dbReference>
<dbReference type="InterPro" id="IPR001810">
    <property type="entry name" value="F-box_dom"/>
</dbReference>
<dbReference type="NCBIfam" id="TIGR01640">
    <property type="entry name" value="F_box_assoc_1"/>
    <property type="match status" value="2"/>
</dbReference>
<dbReference type="PANTHER" id="PTHR31111">
    <property type="entry name" value="BNAA05G37150D PROTEIN-RELATED"/>
    <property type="match status" value="1"/>
</dbReference>
<dbReference type="PANTHER" id="PTHR31111:SF47">
    <property type="entry name" value="F-BOX ASSOCIATED UBIQUITINATION EFFECTOR FAMILY PROTEIN"/>
    <property type="match status" value="1"/>
</dbReference>
<dbReference type="Pfam" id="PF00646">
    <property type="entry name" value="F-box"/>
    <property type="match status" value="1"/>
</dbReference>
<dbReference type="Pfam" id="PF08268">
    <property type="entry name" value="FBA_3"/>
    <property type="match status" value="1"/>
</dbReference>
<dbReference type="SMART" id="SM00256">
    <property type="entry name" value="FBOX"/>
    <property type="match status" value="1"/>
</dbReference>
<dbReference type="SUPFAM" id="SSF81383">
    <property type="entry name" value="F-box domain"/>
    <property type="match status" value="1"/>
</dbReference>